<gene>
    <name evidence="7" type="primary">asqH</name>
    <name type="ORF">AN9231</name>
</gene>
<sequence>MALFRLSAAIVVIFLYIWSPSQRIQCRCRSFERCWPSQQDWSALNNSISGHLVNPRPVAYVCHDPDFDHDACEHVRYMANNSLWRASMPGALQNTVWESSLVSTQTCLPFSAREQPCNQGRIPLYAAVVESKKEVQTAVRFARKYNLRLVIRNTGHDGAGSSSGPESFQIFTHRLNSILYHSNFCPGGSHSKYQTCAGPAVSIGAGVMFRDLYARGAERGFVVTGGDSGTVGAAGGFIQGGGVPAFMGYTWGLAVDNVLEFEVVVATGQLVIANADENADLFWALRGGGGGSFGIVVRVTMRTYPDLPTLKGELTVSGNRHDPSFWTEDIAGLLNALRAFNHLDAPGVFRLIQTSAKGSISAVLEVYLLNRTLAEDLTRMMGPILGTSRRKYNISPITVGKISSFANPNEPTITEFFGSTILSRNFFESPNGPLVMAKRMAAINLDPGDGLLTSNLGGRINNENSDLPLHPAWRSSAHLVSLVVNVDTSLRARERAMVRLTDELMPMLYAIDSSQWVSYSNMGNPNEPDFKERYWGMRNYRRLVSIKKKWDPKDLFIARVGVRSDGWDSEGMCRT</sequence>
<protein>
    <recommendedName>
        <fullName evidence="8">FAD-linked oxidoreductase asqF</fullName>
        <ecNumber evidence="9">1.1.99.-</ecNumber>
    </recommendedName>
    <alternativeName>
        <fullName evidence="8">4'-methoxyviridicatin/aspoquinolone biosynthesis cluster protein asqF</fullName>
    </alternativeName>
    <alternativeName>
        <fullName evidence="7">Aspoquinolone biosynthesis protein F</fullName>
    </alternativeName>
</protein>
<proteinExistence type="inferred from homology"/>
<keyword id="KW-0274">FAD</keyword>
<keyword id="KW-0285">Flavoprotein</keyword>
<keyword id="KW-0325">Glycoprotein</keyword>
<keyword id="KW-0560">Oxidoreductase</keyword>
<keyword id="KW-1185">Reference proteome</keyword>
<keyword id="KW-0732">Signal</keyword>
<accession>Q5AR49</accession>
<accession>C8VJP8</accession>
<feature type="signal peptide" evidence="3">
    <location>
        <begin position="1"/>
        <end position="23"/>
    </location>
</feature>
<feature type="chain" id="PRO_5007924197" description="FAD-linked oxidoreductase asqF">
    <location>
        <begin position="24"/>
        <end position="575"/>
    </location>
</feature>
<feature type="domain" description="FAD-binding PCMH-type" evidence="5">
    <location>
        <begin position="118"/>
        <end position="306"/>
    </location>
</feature>
<feature type="modified residue" description="Pros-8alpha-FAD histidine" evidence="2">
    <location>
        <position position="156"/>
    </location>
</feature>
<feature type="glycosylation site" description="N-linked (GlcNAc...) asparagine" evidence="4">
    <location>
        <position position="45"/>
    </location>
</feature>
<feature type="glycosylation site" description="N-linked (GlcNAc...) asparagine" evidence="4">
    <location>
        <position position="80"/>
    </location>
</feature>
<feature type="glycosylation site" description="N-linked (GlcNAc...) asparagine" evidence="4">
    <location>
        <position position="370"/>
    </location>
</feature>
<comment type="function">
    <text evidence="1 6 8">FAD-linked oxidoreductase; part of the gene cluster that mediates the biosynthesis of the aspoquinolone mycotoxins (PubMed:25251934). Within the pathway, asqF performs FAD-dependent dehydrogenation of the dimethylallyl quinolone peniprequinolone to yield the conjugated aryl diene yaequinolone E (By similarity). The first step of the pathway is catalyzed by the nonribosomal peptide synthetase asqK that condenses anthranilic acid and O-methyl-L-tyrosine to produce 4'-methoxycyclopeptin. 4'-methoxycyclopeptin is then converted to 4'-methoxydehydrocyclopeptin by the ketoglutarate-dependent dioxygenase asqJ. AsqJ also converts its first product 4'-methoxydehydrocyclopeptin to 4'-methoxycyclopenin. The following conversion of 4'-methoxycyclopenin into 4'-methoxyviridicatin is catalyzed by the cyclopenase asqI. 4'-methoxyviridicatin is the precursor of quinolone natural products, and is further converted to quinolinone B. The prenyltransferase asqH1 then catalyzes the canonical Friedel-Crafts alkylation of quinolinone B with dimethylallyl cation to yield dimethylallyl quinolone, which is subjected to FAD-dependent dehydrogenation by the FAD-linked oxidoreductase asqF to yield conjugated aryl diene. The delta(3') double bond then serves as the site of the second alkylation with DMAPP catalyzed by the prenyltransferase asqH2 to yield a carbenium ion intermediate, which can be attacked by H(2)O to yield a styrenyl quinolone containing a C3'-hydroxyprenyl chain. The FAD-dependent monooxygenase asqG performs epoxidation of the terminal C7'-C8' olefin. Finally, after dehydratation of the epoxide at C3 by asqC, the quinolone epoxide rearrangement protein asqO catalyzes an enzymatic 3-exo-tet cyclization to yield the cyclopropyl-THF ring system in aspoquinolone (Probable).</text>
</comment>
<comment type="catalytic activity">
    <reaction evidence="1">
        <text>peniprequinolone + A = yaequinolone E + AH2</text>
        <dbReference type="Rhea" id="RHEA:74003"/>
        <dbReference type="ChEBI" id="CHEBI:13193"/>
        <dbReference type="ChEBI" id="CHEBI:17499"/>
        <dbReference type="ChEBI" id="CHEBI:181572"/>
        <dbReference type="ChEBI" id="CHEBI:193077"/>
    </reaction>
    <physiologicalReaction direction="left-to-right" evidence="1">
        <dbReference type="Rhea" id="RHEA:74004"/>
    </physiologicalReaction>
</comment>
<comment type="cofactor">
    <cofactor evidence="8">
        <name>FAD</name>
        <dbReference type="ChEBI" id="CHEBI:57692"/>
    </cofactor>
</comment>
<comment type="pathway">
    <text evidence="9">Secondary metabolite biosynthesis.</text>
</comment>
<comment type="pathway">
    <text evidence="9">Alkaloid biosynthesis.</text>
</comment>
<comment type="pathway">
    <text evidence="9">Mycotoxin biosynthesis.</text>
</comment>
<comment type="similarity">
    <text evidence="8">Belongs to the oxygen-dependent FAD-linked oxidoreductase family.</text>
</comment>
<reference key="1">
    <citation type="journal article" date="2005" name="Nature">
        <title>Sequencing of Aspergillus nidulans and comparative analysis with A. fumigatus and A. oryzae.</title>
        <authorList>
            <person name="Galagan J.E."/>
            <person name="Calvo S.E."/>
            <person name="Cuomo C."/>
            <person name="Ma L.-J."/>
            <person name="Wortman J.R."/>
            <person name="Batzoglou S."/>
            <person name="Lee S.-I."/>
            <person name="Bastuerkmen M."/>
            <person name="Spevak C.C."/>
            <person name="Clutterbuck J."/>
            <person name="Kapitonov V."/>
            <person name="Jurka J."/>
            <person name="Scazzocchio C."/>
            <person name="Farman M.L."/>
            <person name="Butler J."/>
            <person name="Purcell S."/>
            <person name="Harris S."/>
            <person name="Braus G.H."/>
            <person name="Draht O."/>
            <person name="Busch S."/>
            <person name="D'Enfert C."/>
            <person name="Bouchier C."/>
            <person name="Goldman G.H."/>
            <person name="Bell-Pedersen D."/>
            <person name="Griffiths-Jones S."/>
            <person name="Doonan J.H."/>
            <person name="Yu J."/>
            <person name="Vienken K."/>
            <person name="Pain A."/>
            <person name="Freitag M."/>
            <person name="Selker E.U."/>
            <person name="Archer D.B."/>
            <person name="Penalva M.A."/>
            <person name="Oakley B.R."/>
            <person name="Momany M."/>
            <person name="Tanaka T."/>
            <person name="Kumagai T."/>
            <person name="Asai K."/>
            <person name="Machida M."/>
            <person name="Nierman W.C."/>
            <person name="Denning D.W."/>
            <person name="Caddick M.X."/>
            <person name="Hynes M."/>
            <person name="Paoletti M."/>
            <person name="Fischer R."/>
            <person name="Miller B.L."/>
            <person name="Dyer P.S."/>
            <person name="Sachs M.S."/>
            <person name="Osmani S.A."/>
            <person name="Birren B.W."/>
        </authorList>
    </citation>
    <scope>NUCLEOTIDE SEQUENCE [LARGE SCALE GENOMIC DNA]</scope>
    <source>
        <strain>FGSC A4 / ATCC 38163 / CBS 112.46 / NRRL 194 / M139</strain>
    </source>
</reference>
<reference key="2">
    <citation type="journal article" date="2009" name="Fungal Genet. Biol.">
        <title>The 2008 update of the Aspergillus nidulans genome annotation: a community effort.</title>
        <authorList>
            <person name="Wortman J.R."/>
            <person name="Gilsenan J.M."/>
            <person name="Joardar V."/>
            <person name="Deegan J."/>
            <person name="Clutterbuck J."/>
            <person name="Andersen M.R."/>
            <person name="Archer D."/>
            <person name="Bencina M."/>
            <person name="Braus G."/>
            <person name="Coutinho P."/>
            <person name="von Dohren H."/>
            <person name="Doonan J."/>
            <person name="Driessen A.J."/>
            <person name="Durek P."/>
            <person name="Espeso E."/>
            <person name="Fekete E."/>
            <person name="Flipphi M."/>
            <person name="Estrada C.G."/>
            <person name="Geysens S."/>
            <person name="Goldman G."/>
            <person name="de Groot P.W."/>
            <person name="Hansen K."/>
            <person name="Harris S.D."/>
            <person name="Heinekamp T."/>
            <person name="Helmstaedt K."/>
            <person name="Henrissat B."/>
            <person name="Hofmann G."/>
            <person name="Homan T."/>
            <person name="Horio T."/>
            <person name="Horiuchi H."/>
            <person name="James S."/>
            <person name="Jones M."/>
            <person name="Karaffa L."/>
            <person name="Karanyi Z."/>
            <person name="Kato M."/>
            <person name="Keller N."/>
            <person name="Kelly D.E."/>
            <person name="Kiel J.A."/>
            <person name="Kim J.M."/>
            <person name="van der Klei I.J."/>
            <person name="Klis F.M."/>
            <person name="Kovalchuk A."/>
            <person name="Krasevec N."/>
            <person name="Kubicek C.P."/>
            <person name="Liu B."/>
            <person name="Maccabe A."/>
            <person name="Meyer V."/>
            <person name="Mirabito P."/>
            <person name="Miskei M."/>
            <person name="Mos M."/>
            <person name="Mullins J."/>
            <person name="Nelson D.R."/>
            <person name="Nielsen J."/>
            <person name="Oakley B.R."/>
            <person name="Osmani S.A."/>
            <person name="Pakula T."/>
            <person name="Paszewski A."/>
            <person name="Paulsen I."/>
            <person name="Pilsyk S."/>
            <person name="Pocsi I."/>
            <person name="Punt P.J."/>
            <person name="Ram A.F."/>
            <person name="Ren Q."/>
            <person name="Robellet X."/>
            <person name="Robson G."/>
            <person name="Seiboth B."/>
            <person name="van Solingen P."/>
            <person name="Specht T."/>
            <person name="Sun J."/>
            <person name="Taheri-Talesh N."/>
            <person name="Takeshita N."/>
            <person name="Ussery D."/>
            <person name="vanKuyk P.A."/>
            <person name="Visser H."/>
            <person name="van de Vondervoort P.J."/>
            <person name="de Vries R.P."/>
            <person name="Walton J."/>
            <person name="Xiang X."/>
            <person name="Xiong Y."/>
            <person name="Zeng A.P."/>
            <person name="Brandt B.W."/>
            <person name="Cornell M.J."/>
            <person name="van den Hondel C.A."/>
            <person name="Visser J."/>
            <person name="Oliver S.G."/>
            <person name="Turner G."/>
        </authorList>
    </citation>
    <scope>GENOME REANNOTATION</scope>
    <source>
        <strain>FGSC A4 / ATCC 38163 / CBS 112.46 / NRRL 194 / M139</strain>
    </source>
</reference>
<reference key="3">
    <citation type="journal article" date="2014" name="Angew. Chem. Int. Ed.">
        <title>Non-heme dioxygenase catalyzes atypical oxidations of 6,7-bicyclic systems to form the 6,6-quinolone core of viridicatin-type fungal alkaloids.</title>
        <authorList>
            <person name="Ishikawa N."/>
            <person name="Tanaka H."/>
            <person name="Koyama F."/>
            <person name="Noguchi H."/>
            <person name="Wang C.C."/>
            <person name="Hotta K."/>
            <person name="Watanabe K."/>
        </authorList>
    </citation>
    <scope>FUNCTION</scope>
    <scope>PATHWAY</scope>
</reference>
<organism>
    <name type="scientific">Emericella nidulans (strain FGSC A4 / ATCC 38163 / CBS 112.46 / NRRL 194 / M139)</name>
    <name type="common">Aspergillus nidulans</name>
    <dbReference type="NCBI Taxonomy" id="227321"/>
    <lineage>
        <taxon>Eukaryota</taxon>
        <taxon>Fungi</taxon>
        <taxon>Dikarya</taxon>
        <taxon>Ascomycota</taxon>
        <taxon>Pezizomycotina</taxon>
        <taxon>Eurotiomycetes</taxon>
        <taxon>Eurotiomycetidae</taxon>
        <taxon>Eurotiales</taxon>
        <taxon>Aspergillaceae</taxon>
        <taxon>Aspergillus</taxon>
        <taxon>Aspergillus subgen. Nidulantes</taxon>
    </lineage>
</organism>
<name>ASQF_EMENI</name>
<evidence type="ECO:0000250" key="1">
    <source>
        <dbReference type="UniProtKB" id="A0A1B2CTB4"/>
    </source>
</evidence>
<evidence type="ECO:0000250" key="2">
    <source>
        <dbReference type="UniProtKB" id="P08159"/>
    </source>
</evidence>
<evidence type="ECO:0000255" key="3"/>
<evidence type="ECO:0000255" key="4">
    <source>
        <dbReference type="PROSITE-ProRule" id="PRU00498"/>
    </source>
</evidence>
<evidence type="ECO:0000255" key="5">
    <source>
        <dbReference type="PROSITE-ProRule" id="PRU00718"/>
    </source>
</evidence>
<evidence type="ECO:0000269" key="6">
    <source>
    </source>
</evidence>
<evidence type="ECO:0000303" key="7">
    <source>
    </source>
</evidence>
<evidence type="ECO:0000305" key="8"/>
<evidence type="ECO:0000305" key="9">
    <source>
    </source>
</evidence>
<dbReference type="EC" id="1.1.99.-" evidence="9"/>
<dbReference type="EMBL" id="BN001306">
    <property type="protein sequence ID" value="CBF82270.1"/>
    <property type="molecule type" value="Genomic_DNA"/>
</dbReference>
<dbReference type="EMBL" id="AACD01000170">
    <property type="protein sequence ID" value="EAA61522.1"/>
    <property type="molecule type" value="Genomic_DNA"/>
</dbReference>
<dbReference type="RefSeq" id="XP_682500.1">
    <property type="nucleotide sequence ID" value="XM_677408.1"/>
</dbReference>
<dbReference type="SMR" id="Q5AR49"/>
<dbReference type="STRING" id="227321.Q5AR49"/>
<dbReference type="GlyCosmos" id="Q5AR49">
    <property type="glycosylation" value="3 sites, No reported glycans"/>
</dbReference>
<dbReference type="EnsemblFungi" id="CBF82270">
    <property type="protein sequence ID" value="CBF82270"/>
    <property type="gene ID" value="ANIA_09231"/>
</dbReference>
<dbReference type="KEGG" id="ani:ANIA_09231"/>
<dbReference type="VEuPathDB" id="FungiDB:AN9231"/>
<dbReference type="eggNOG" id="ENOG502R8I5">
    <property type="taxonomic scope" value="Eukaryota"/>
</dbReference>
<dbReference type="HOGENOM" id="CLU_018354_4_4_1"/>
<dbReference type="InParanoid" id="Q5AR49"/>
<dbReference type="OMA" id="CHQGRIP"/>
<dbReference type="OrthoDB" id="9983560at2759"/>
<dbReference type="BioCyc" id="MetaCyc:MONOMER-124178"/>
<dbReference type="Proteomes" id="UP000000560">
    <property type="component" value="Chromosome VI"/>
</dbReference>
<dbReference type="GO" id="GO:0071949">
    <property type="term" value="F:FAD binding"/>
    <property type="evidence" value="ECO:0007669"/>
    <property type="project" value="InterPro"/>
</dbReference>
<dbReference type="GO" id="GO:0016491">
    <property type="term" value="F:oxidoreductase activity"/>
    <property type="evidence" value="ECO:0000318"/>
    <property type="project" value="GO_Central"/>
</dbReference>
<dbReference type="Gene3D" id="3.30.465.10">
    <property type="match status" value="2"/>
</dbReference>
<dbReference type="InterPro" id="IPR012951">
    <property type="entry name" value="BBE"/>
</dbReference>
<dbReference type="InterPro" id="IPR016166">
    <property type="entry name" value="FAD-bd_PCMH"/>
</dbReference>
<dbReference type="InterPro" id="IPR036318">
    <property type="entry name" value="FAD-bd_PCMH-like_sf"/>
</dbReference>
<dbReference type="InterPro" id="IPR016169">
    <property type="entry name" value="FAD-bd_PCMH_sub2"/>
</dbReference>
<dbReference type="InterPro" id="IPR050416">
    <property type="entry name" value="FAD-linked_Oxidoreductase"/>
</dbReference>
<dbReference type="InterPro" id="IPR006094">
    <property type="entry name" value="Oxid_FAD_bind_N"/>
</dbReference>
<dbReference type="PANTHER" id="PTHR42973">
    <property type="entry name" value="BINDING OXIDOREDUCTASE, PUTATIVE (AFU_ORTHOLOGUE AFUA_1G17690)-RELATED"/>
    <property type="match status" value="1"/>
</dbReference>
<dbReference type="PANTHER" id="PTHR42973:SF39">
    <property type="entry name" value="FAD-BINDING PCMH-TYPE DOMAIN-CONTAINING PROTEIN"/>
    <property type="match status" value="1"/>
</dbReference>
<dbReference type="Pfam" id="PF08031">
    <property type="entry name" value="BBE"/>
    <property type="match status" value="1"/>
</dbReference>
<dbReference type="Pfam" id="PF01565">
    <property type="entry name" value="FAD_binding_4"/>
    <property type="match status" value="1"/>
</dbReference>
<dbReference type="SUPFAM" id="SSF56176">
    <property type="entry name" value="FAD-binding/transporter-associated domain-like"/>
    <property type="match status" value="1"/>
</dbReference>
<dbReference type="PROSITE" id="PS51387">
    <property type="entry name" value="FAD_PCMH"/>
    <property type="match status" value="1"/>
</dbReference>